<evidence type="ECO:0000255" key="1">
    <source>
        <dbReference type="HAMAP-Rule" id="MF_00372"/>
    </source>
</evidence>
<comment type="function">
    <text evidence="1">Catalyzes the hydrolytic cleavage of the carbon-nitrogen bond in imidazolone-5-propanoate to yield N-formimidoyl-L-glutamate. It is the third step in the universal histidine degradation pathway.</text>
</comment>
<comment type="catalytic activity">
    <reaction evidence="1">
        <text>4-imidazolone-5-propanoate + H2O = N-formimidoyl-L-glutamate</text>
        <dbReference type="Rhea" id="RHEA:23660"/>
        <dbReference type="ChEBI" id="CHEBI:15377"/>
        <dbReference type="ChEBI" id="CHEBI:58928"/>
        <dbReference type="ChEBI" id="CHEBI:77893"/>
        <dbReference type="EC" id="3.5.2.7"/>
    </reaction>
</comment>
<comment type="cofactor">
    <cofactor evidence="1">
        <name>Zn(2+)</name>
        <dbReference type="ChEBI" id="CHEBI:29105"/>
    </cofactor>
    <cofactor evidence="1">
        <name>Fe(3+)</name>
        <dbReference type="ChEBI" id="CHEBI:29034"/>
    </cofactor>
    <text evidence="1">Binds 1 zinc or iron ion per subunit.</text>
</comment>
<comment type="pathway">
    <text evidence="1">Amino-acid degradation; L-histidine degradation into L-glutamate; N-formimidoyl-L-glutamate from L-histidine: step 3/3.</text>
</comment>
<comment type="subcellular location">
    <subcellularLocation>
        <location evidence="1">Cytoplasm</location>
    </subcellularLocation>
</comment>
<comment type="similarity">
    <text evidence="1">Belongs to the metallo-dependent hydrolases superfamily. HutI family.</text>
</comment>
<organism>
    <name type="scientific">Myxococcus xanthus (strain DK1622)</name>
    <dbReference type="NCBI Taxonomy" id="246197"/>
    <lineage>
        <taxon>Bacteria</taxon>
        <taxon>Pseudomonadati</taxon>
        <taxon>Myxococcota</taxon>
        <taxon>Myxococcia</taxon>
        <taxon>Myxococcales</taxon>
        <taxon>Cystobacterineae</taxon>
        <taxon>Myxococcaceae</taxon>
        <taxon>Myxococcus</taxon>
    </lineage>
</organism>
<keyword id="KW-0963">Cytoplasm</keyword>
<keyword id="KW-0369">Histidine metabolism</keyword>
<keyword id="KW-0378">Hydrolase</keyword>
<keyword id="KW-0408">Iron</keyword>
<keyword id="KW-0479">Metal-binding</keyword>
<keyword id="KW-1185">Reference proteome</keyword>
<keyword id="KW-0862">Zinc</keyword>
<proteinExistence type="inferred from homology"/>
<gene>
    <name evidence="1" type="primary">hutI</name>
    <name type="ordered locus">MXAN_4345</name>
</gene>
<sequence>MDVLDLLVRNTSEVLTVEGSHRERAEDALTPRPGAVVGVREGRIAYVGPEAGLPTGAVGPGTEVVDAQGGFVGPGFVDPHTHLVFAGERSAEFDLRNQGATYLEIAKAGGGIASTVQATRAASEEELVRLALPRTKRLLEQGVTTAEVKSGYGLDLATELKMLRAVRRLGTLTPLELVPTLLCAHAVPEEYRGKREDYVRLCIEEILPAVAREGLARFCDVFVEDSAFTVDEARRILSAGRALGMVPRLHADQLTVCGASELAAELGAATADHLEQVTDAGLKALADANVTAVLVPTSTLFLRMRPYAPGRRIRDAGLNVALGTNVNPGSAMSENTALALGLACLENGLTAAEAYWGATRGAAMSLGLQQHGRLTVGDAGDLVVFSCASYRHLPYHLGVAHARVVVKAGRIAVRQQMEGCA</sequence>
<dbReference type="EC" id="3.5.2.7" evidence="1"/>
<dbReference type="EMBL" id="CP000113">
    <property type="protein sequence ID" value="ABF88285.1"/>
    <property type="molecule type" value="Genomic_DNA"/>
</dbReference>
<dbReference type="RefSeq" id="WP_011554346.1">
    <property type="nucleotide sequence ID" value="NC_008095.1"/>
</dbReference>
<dbReference type="SMR" id="Q1D4A5"/>
<dbReference type="STRING" id="246197.MXAN_4345"/>
<dbReference type="EnsemblBacteria" id="ABF88285">
    <property type="protein sequence ID" value="ABF88285"/>
    <property type="gene ID" value="MXAN_4345"/>
</dbReference>
<dbReference type="GeneID" id="41361657"/>
<dbReference type="KEGG" id="mxa:MXAN_4345"/>
<dbReference type="eggNOG" id="COG1228">
    <property type="taxonomic scope" value="Bacteria"/>
</dbReference>
<dbReference type="HOGENOM" id="CLU_041647_0_1_7"/>
<dbReference type="OrthoDB" id="9807210at2"/>
<dbReference type="UniPathway" id="UPA00379">
    <property type="reaction ID" value="UER00551"/>
</dbReference>
<dbReference type="Proteomes" id="UP000002402">
    <property type="component" value="Chromosome"/>
</dbReference>
<dbReference type="GO" id="GO:0005737">
    <property type="term" value="C:cytoplasm"/>
    <property type="evidence" value="ECO:0007669"/>
    <property type="project" value="UniProtKB-SubCell"/>
</dbReference>
<dbReference type="GO" id="GO:0050480">
    <property type="term" value="F:imidazolonepropionase activity"/>
    <property type="evidence" value="ECO:0007669"/>
    <property type="project" value="UniProtKB-UniRule"/>
</dbReference>
<dbReference type="GO" id="GO:0005506">
    <property type="term" value="F:iron ion binding"/>
    <property type="evidence" value="ECO:0007669"/>
    <property type="project" value="UniProtKB-UniRule"/>
</dbReference>
<dbReference type="GO" id="GO:0008270">
    <property type="term" value="F:zinc ion binding"/>
    <property type="evidence" value="ECO:0007669"/>
    <property type="project" value="UniProtKB-UniRule"/>
</dbReference>
<dbReference type="GO" id="GO:0019556">
    <property type="term" value="P:L-histidine catabolic process to glutamate and formamide"/>
    <property type="evidence" value="ECO:0007669"/>
    <property type="project" value="UniProtKB-UniPathway"/>
</dbReference>
<dbReference type="GO" id="GO:0019557">
    <property type="term" value="P:L-histidine catabolic process to glutamate and formate"/>
    <property type="evidence" value="ECO:0007669"/>
    <property type="project" value="UniProtKB-UniPathway"/>
</dbReference>
<dbReference type="CDD" id="cd01296">
    <property type="entry name" value="Imidazolone-5PH"/>
    <property type="match status" value="1"/>
</dbReference>
<dbReference type="FunFam" id="3.20.20.140:FF:000007">
    <property type="entry name" value="Imidazolonepropionase"/>
    <property type="match status" value="1"/>
</dbReference>
<dbReference type="Gene3D" id="3.20.20.140">
    <property type="entry name" value="Metal-dependent hydrolases"/>
    <property type="match status" value="1"/>
</dbReference>
<dbReference type="Gene3D" id="2.30.40.10">
    <property type="entry name" value="Urease, subunit C, domain 1"/>
    <property type="match status" value="1"/>
</dbReference>
<dbReference type="HAMAP" id="MF_00372">
    <property type="entry name" value="HutI"/>
    <property type="match status" value="1"/>
</dbReference>
<dbReference type="InterPro" id="IPR006680">
    <property type="entry name" value="Amidohydro-rel"/>
</dbReference>
<dbReference type="InterPro" id="IPR005920">
    <property type="entry name" value="HutI"/>
</dbReference>
<dbReference type="InterPro" id="IPR011059">
    <property type="entry name" value="Metal-dep_hydrolase_composite"/>
</dbReference>
<dbReference type="InterPro" id="IPR032466">
    <property type="entry name" value="Metal_Hydrolase"/>
</dbReference>
<dbReference type="NCBIfam" id="TIGR01224">
    <property type="entry name" value="hutI"/>
    <property type="match status" value="1"/>
</dbReference>
<dbReference type="PANTHER" id="PTHR42752">
    <property type="entry name" value="IMIDAZOLONEPROPIONASE"/>
    <property type="match status" value="1"/>
</dbReference>
<dbReference type="PANTHER" id="PTHR42752:SF1">
    <property type="entry name" value="IMIDAZOLONEPROPIONASE-RELATED"/>
    <property type="match status" value="1"/>
</dbReference>
<dbReference type="Pfam" id="PF01979">
    <property type="entry name" value="Amidohydro_1"/>
    <property type="match status" value="1"/>
</dbReference>
<dbReference type="SUPFAM" id="SSF51338">
    <property type="entry name" value="Composite domain of metallo-dependent hydrolases"/>
    <property type="match status" value="1"/>
</dbReference>
<dbReference type="SUPFAM" id="SSF51556">
    <property type="entry name" value="Metallo-dependent hydrolases"/>
    <property type="match status" value="1"/>
</dbReference>
<protein>
    <recommendedName>
        <fullName evidence="1">Imidazolonepropionase</fullName>
        <ecNumber evidence="1">3.5.2.7</ecNumber>
    </recommendedName>
    <alternativeName>
        <fullName evidence="1">Imidazolone-5-propionate hydrolase</fullName>
    </alternativeName>
</protein>
<feature type="chain" id="PRO_0000306474" description="Imidazolonepropionase">
    <location>
        <begin position="1"/>
        <end position="421"/>
    </location>
</feature>
<feature type="binding site" evidence="1">
    <location>
        <position position="80"/>
    </location>
    <ligand>
        <name>Fe(3+)</name>
        <dbReference type="ChEBI" id="CHEBI:29034"/>
    </ligand>
</feature>
<feature type="binding site" evidence="1">
    <location>
        <position position="80"/>
    </location>
    <ligand>
        <name>Zn(2+)</name>
        <dbReference type="ChEBI" id="CHEBI:29105"/>
    </ligand>
</feature>
<feature type="binding site" evidence="1">
    <location>
        <position position="82"/>
    </location>
    <ligand>
        <name>Fe(3+)</name>
        <dbReference type="ChEBI" id="CHEBI:29034"/>
    </ligand>
</feature>
<feature type="binding site" evidence="1">
    <location>
        <position position="82"/>
    </location>
    <ligand>
        <name>Zn(2+)</name>
        <dbReference type="ChEBI" id="CHEBI:29105"/>
    </ligand>
</feature>
<feature type="binding site" evidence="1">
    <location>
        <position position="89"/>
    </location>
    <ligand>
        <name>4-imidazolone-5-propanoate</name>
        <dbReference type="ChEBI" id="CHEBI:77893"/>
    </ligand>
</feature>
<feature type="binding site" evidence="1">
    <location>
        <position position="152"/>
    </location>
    <ligand>
        <name>4-imidazolone-5-propanoate</name>
        <dbReference type="ChEBI" id="CHEBI:77893"/>
    </ligand>
</feature>
<feature type="binding site" evidence="1">
    <location>
        <position position="152"/>
    </location>
    <ligand>
        <name>N-formimidoyl-L-glutamate</name>
        <dbReference type="ChEBI" id="CHEBI:58928"/>
    </ligand>
</feature>
<feature type="binding site" evidence="1">
    <location>
        <position position="185"/>
    </location>
    <ligand>
        <name>4-imidazolone-5-propanoate</name>
        <dbReference type="ChEBI" id="CHEBI:77893"/>
    </ligand>
</feature>
<feature type="binding site" evidence="1">
    <location>
        <position position="250"/>
    </location>
    <ligand>
        <name>Fe(3+)</name>
        <dbReference type="ChEBI" id="CHEBI:29034"/>
    </ligand>
</feature>
<feature type="binding site" evidence="1">
    <location>
        <position position="250"/>
    </location>
    <ligand>
        <name>Zn(2+)</name>
        <dbReference type="ChEBI" id="CHEBI:29105"/>
    </ligand>
</feature>
<feature type="binding site" evidence="1">
    <location>
        <position position="253"/>
    </location>
    <ligand>
        <name>4-imidazolone-5-propanoate</name>
        <dbReference type="ChEBI" id="CHEBI:77893"/>
    </ligand>
</feature>
<feature type="binding site" evidence="1">
    <location>
        <position position="327"/>
    </location>
    <ligand>
        <name>N-formimidoyl-L-glutamate</name>
        <dbReference type="ChEBI" id="CHEBI:58928"/>
    </ligand>
</feature>
<feature type="binding site" evidence="1">
    <location>
        <position position="329"/>
    </location>
    <ligand>
        <name>N-formimidoyl-L-glutamate</name>
        <dbReference type="ChEBI" id="CHEBI:58928"/>
    </ligand>
</feature>
<feature type="binding site" evidence="1">
    <location>
        <position position="330"/>
    </location>
    <ligand>
        <name>4-imidazolone-5-propanoate</name>
        <dbReference type="ChEBI" id="CHEBI:77893"/>
    </ligand>
</feature>
<name>HUTI_MYXXD</name>
<reference key="1">
    <citation type="journal article" date="2006" name="Proc. Natl. Acad. Sci. U.S.A.">
        <title>Evolution of sensory complexity recorded in a myxobacterial genome.</title>
        <authorList>
            <person name="Goldman B.S."/>
            <person name="Nierman W.C."/>
            <person name="Kaiser D."/>
            <person name="Slater S.C."/>
            <person name="Durkin A.S."/>
            <person name="Eisen J.A."/>
            <person name="Ronning C.M."/>
            <person name="Barbazuk W.B."/>
            <person name="Blanchard M."/>
            <person name="Field C."/>
            <person name="Halling C."/>
            <person name="Hinkle G."/>
            <person name="Iartchuk O."/>
            <person name="Kim H.S."/>
            <person name="Mackenzie C."/>
            <person name="Madupu R."/>
            <person name="Miller N."/>
            <person name="Shvartsbeyn A."/>
            <person name="Sullivan S.A."/>
            <person name="Vaudin M."/>
            <person name="Wiegand R."/>
            <person name="Kaplan H.B."/>
        </authorList>
    </citation>
    <scope>NUCLEOTIDE SEQUENCE [LARGE SCALE GENOMIC DNA]</scope>
    <source>
        <strain>DK1622</strain>
    </source>
</reference>
<accession>Q1D4A5</accession>